<name>PIR5_YEAS1</name>
<reference key="1">
    <citation type="submission" date="2005-03" db="EMBL/GenBank/DDBJ databases">
        <title>Annotation of the Saccharomyces cerevisiae RM11-1a genome.</title>
        <authorList>
            <consortium name="The Broad Institute Genome Sequencing Platform"/>
            <person name="Birren B.W."/>
            <person name="Lander E.S."/>
            <person name="Galagan J.E."/>
            <person name="Nusbaum C."/>
            <person name="Devon K."/>
            <person name="Cuomo C."/>
            <person name="Jaffe D.B."/>
            <person name="Butler J."/>
            <person name="Alvarez P."/>
            <person name="Gnerre S."/>
            <person name="Grabherr M."/>
            <person name="Kleber M."/>
            <person name="Mauceli E.W."/>
            <person name="Brockman W."/>
            <person name="MacCallum I.A."/>
            <person name="Rounsley S."/>
            <person name="Young S.K."/>
            <person name="LaButti K."/>
            <person name="Pushparaj V."/>
            <person name="DeCaprio D."/>
            <person name="Crawford M."/>
            <person name="Koehrsen M."/>
            <person name="Engels R."/>
            <person name="Montgomery P."/>
            <person name="Pearson M."/>
            <person name="Howarth C."/>
            <person name="Larson L."/>
            <person name="Luoma S."/>
            <person name="White J."/>
            <person name="O'Leary S."/>
            <person name="Kodira C.D."/>
            <person name="Zeng Q."/>
            <person name="Yandava C."/>
            <person name="Alvarado L."/>
            <person name="Pratt S."/>
            <person name="Kruglyak L."/>
        </authorList>
    </citation>
    <scope>NUCLEOTIDE SEQUENCE [LARGE SCALE GENOMIC DNA]</scope>
    <source>
        <strain>RM11-1a</strain>
    </source>
</reference>
<sequence length="287" mass="30200">MHYKKAFLASLLSSIALTAYAPPEPWATLTPSSKMDGGTTEYRTSFGLAVIPFTVTESKVKRNVISQINDGQVQVTTQKLPHPVSQIGDGQIQVTTQKVPPVVSHIVSQIGDGQLQITTAKNVVTKSTIAVPSKTATATATSTATAVSQIHDGQVQVTISSASSSSVLSKSKLEPTKKPNNENVIKVQACKSSGTLAITLQGGVLIDSNGRIGSIVANRQFQFDGPPPQAGAIYAGGWSITKHGTLAIGDNDVFYQCLSGTFYNLYDQSIGGQCNPVHLQTVGLVDC</sequence>
<keyword id="KW-0134">Cell wall</keyword>
<keyword id="KW-0165">Cleavage on pair of basic residues</keyword>
<keyword id="KW-0677">Repeat</keyword>
<keyword id="KW-0964">Secreted</keyword>
<keyword id="KW-0732">Signal</keyword>
<gene>
    <name type="primary">PIR5</name>
    <name type="ORF">SCRG_03516</name>
</gene>
<organism>
    <name type="scientific">Saccharomyces cerevisiae (strain RM11-1a)</name>
    <name type="common">Baker's yeast</name>
    <dbReference type="NCBI Taxonomy" id="285006"/>
    <lineage>
        <taxon>Eukaryota</taxon>
        <taxon>Fungi</taxon>
        <taxon>Dikarya</taxon>
        <taxon>Ascomycota</taxon>
        <taxon>Saccharomycotina</taxon>
        <taxon>Saccharomycetes</taxon>
        <taxon>Saccharomycetales</taxon>
        <taxon>Saccharomycetaceae</taxon>
        <taxon>Saccharomyces</taxon>
    </lineage>
</organism>
<evidence type="ECO:0000250" key="1"/>
<evidence type="ECO:0000255" key="2"/>
<evidence type="ECO:0000305" key="3"/>
<dbReference type="EMBL" id="CH408050">
    <property type="protein sequence ID" value="EDV12616.1"/>
    <property type="molecule type" value="Genomic_DNA"/>
</dbReference>
<dbReference type="HOGENOM" id="CLU_039662_0_0_1"/>
<dbReference type="OrthoDB" id="35792at4893"/>
<dbReference type="Proteomes" id="UP000008335">
    <property type="component" value="Unassembled WGS sequence"/>
</dbReference>
<dbReference type="GO" id="GO:0005576">
    <property type="term" value="C:extracellular region"/>
    <property type="evidence" value="ECO:0007669"/>
    <property type="project" value="UniProtKB-KW"/>
</dbReference>
<dbReference type="GO" id="GO:0009277">
    <property type="term" value="C:fungal-type cell wall"/>
    <property type="evidence" value="ECO:0007669"/>
    <property type="project" value="TreeGrafter"/>
</dbReference>
<dbReference type="GO" id="GO:0005199">
    <property type="term" value="F:structural constituent of cell wall"/>
    <property type="evidence" value="ECO:0007669"/>
    <property type="project" value="InterPro"/>
</dbReference>
<dbReference type="GO" id="GO:0031505">
    <property type="term" value="P:fungal-type cell wall organization"/>
    <property type="evidence" value="ECO:0007669"/>
    <property type="project" value="UniProtKB-ARBA"/>
</dbReference>
<dbReference type="InterPro" id="IPR054508">
    <property type="entry name" value="PIR1-like_C"/>
</dbReference>
<dbReference type="InterPro" id="IPR051153">
    <property type="entry name" value="Yeast_CWMannoprotein_PIR"/>
</dbReference>
<dbReference type="InterPro" id="IPR000420">
    <property type="entry name" value="Yeast_PIR_rpt"/>
</dbReference>
<dbReference type="PANTHER" id="PTHR47254">
    <property type="entry name" value="CELL WALL MANNOPROTEIN CIS3-RELATED"/>
    <property type="match status" value="1"/>
</dbReference>
<dbReference type="PANTHER" id="PTHR47254:SF1">
    <property type="entry name" value="CELL WALL MANNOPROTEIN CIS3-RELATED"/>
    <property type="match status" value="1"/>
</dbReference>
<dbReference type="Pfam" id="PF00399">
    <property type="entry name" value="PIR"/>
    <property type="match status" value="3"/>
</dbReference>
<dbReference type="Pfam" id="PF22799">
    <property type="entry name" value="PIR1-like_C"/>
    <property type="match status" value="1"/>
</dbReference>
<dbReference type="PROSITE" id="PS00929">
    <property type="entry name" value="PIR_REPEAT_1"/>
    <property type="match status" value="4"/>
</dbReference>
<dbReference type="PROSITE" id="PS50256">
    <property type="entry name" value="PIR_REPEAT_2"/>
    <property type="match status" value="4"/>
</dbReference>
<feature type="signal peptide" evidence="2">
    <location>
        <begin position="1"/>
        <end position="21"/>
    </location>
</feature>
<feature type="propeptide" id="PRO_0000377620" evidence="1">
    <location>
        <begin position="22"/>
        <end position="62"/>
    </location>
</feature>
<feature type="chain" id="PRO_0000377742" description="Cell wall protein PIR5">
    <location>
        <begin position="63"/>
        <end position="287"/>
    </location>
</feature>
<feature type="repeat" description="PIR1/2/3 1">
    <location>
        <begin position="62"/>
        <end position="80"/>
    </location>
</feature>
<feature type="repeat" description="PIR1/2/3 2">
    <location>
        <begin position="81"/>
        <end position="99"/>
    </location>
</feature>
<feature type="repeat" description="PIR1/2/3 3">
    <location>
        <begin position="104"/>
        <end position="122"/>
    </location>
</feature>
<feature type="repeat" description="PIR1/2/3 4">
    <location>
        <begin position="144"/>
        <end position="162"/>
    </location>
</feature>
<feature type="site" description="Cleavage; by KEX2" evidence="2">
    <location>
        <begin position="62"/>
        <end position="63"/>
    </location>
</feature>
<feature type="site" description="Covalent attachment to cell wall glycan" evidence="1">
    <location>
        <position position="72"/>
    </location>
</feature>
<feature type="site" description="Covalent attachment to cell wall glycan" evidence="1">
    <location>
        <position position="91"/>
    </location>
</feature>
<feature type="site" description="Covalent attachment to cell wall glycan" evidence="1">
    <location>
        <position position="114"/>
    </location>
</feature>
<feature type="site" description="Covalent attachment to cell wall glycan" evidence="1">
    <location>
        <position position="154"/>
    </location>
</feature>
<protein>
    <recommendedName>
        <fullName>Cell wall protein PIR5</fullName>
    </recommendedName>
    <alternativeName>
        <fullName>Protein with internal repeats 5</fullName>
    </alternativeName>
</protein>
<proteinExistence type="inferred from homology"/>
<comment type="function">
    <text evidence="1">Component of the outer cell wall layer. May be involved in meiosis and sporulation (By similarity).</text>
</comment>
<comment type="subcellular location">
    <subcellularLocation>
        <location evidence="1">Secreted</location>
        <location evidence="1">Cell wall</location>
    </subcellularLocation>
    <text evidence="1">Covalently attached to the cell wall.</text>
</comment>
<comment type="domain">
    <text evidence="1">The PIR1/2/3 repeats are required for the covalent linkage to the cell wall (By similarity). Their number varies among different strains of S.cerevisiae.</text>
</comment>
<comment type="PTM">
    <text evidence="1">Covalently linked to beta-1,3-glucan of the inner cell wall layer via an alkali-sensitive ester linkage between the gamma-carboxyl group of glutamic acids, arising from specific glutamines within the PIR1/2/3 repeats, and hydroxyl groups of glucoses of beta-1,3-glucan chains.</text>
</comment>
<comment type="similarity">
    <text evidence="3">Belongs to the PIR protein family.</text>
</comment>
<accession>B3LPW3</accession>